<feature type="chain" id="PRO_0000131425" description="Large ribosomal subunit protein uL18c">
    <location>
        <begin position="1"/>
        <end position="105"/>
    </location>
</feature>
<comment type="function">
    <text evidence="1">Binds 5S rRNA, forms part of the central protuberance of the 50S subunit.</text>
</comment>
<comment type="subunit">
    <text evidence="1">Part of the 50S ribosomal subunit; contacts the 5S rRNA.</text>
</comment>
<comment type="subcellular location">
    <subcellularLocation>
        <location>Plastid</location>
        <location>Chloroplast</location>
    </subcellularLocation>
</comment>
<comment type="similarity">
    <text evidence="2">Belongs to the universal ribosomal protein uL18 family.</text>
</comment>
<protein>
    <recommendedName>
        <fullName evidence="2">Large ribosomal subunit protein uL18c</fullName>
    </recommendedName>
    <alternativeName>
        <fullName>50S ribosomal protein L18, chloroplastic</fullName>
    </alternativeName>
</protein>
<evidence type="ECO:0000250" key="1"/>
<evidence type="ECO:0000305" key="2"/>
<sequence length="105" mass="11956">MKKKIRGTKNRPRLCVFRSNKHIYAQIIDDTNNKIIATSSTLVILSEQNKKISNDCHAAHKIGQNIAQKSKALGIKKVIFDRQNKIYHGRIKALAEAVREEGIEF</sequence>
<reference key="1">
    <citation type="journal article" date="2004" name="J. Mol. Evol.">
        <title>Comparative analysis of the complete plastid genome sequence of the red alga Gracilaria tenuistipitata var. liui provides insights into the evolution of rhodoplasts and their relationship to other plastids.</title>
        <authorList>
            <person name="Hagopian J.C."/>
            <person name="Reis M."/>
            <person name="Kitajima J.P."/>
            <person name="Bhattacharya D."/>
            <person name="de Oliveira M.C."/>
        </authorList>
    </citation>
    <scope>NUCLEOTIDE SEQUENCE [LARGE SCALE GENOMIC DNA]</scope>
</reference>
<organism>
    <name type="scientific">Gracilaria tenuistipitata var. liui</name>
    <name type="common">Red alga</name>
    <dbReference type="NCBI Taxonomy" id="285951"/>
    <lineage>
        <taxon>Eukaryota</taxon>
        <taxon>Rhodophyta</taxon>
        <taxon>Florideophyceae</taxon>
        <taxon>Rhodymeniophycidae</taxon>
        <taxon>Gracilariales</taxon>
        <taxon>Gracilariaceae</taxon>
        <taxon>Gracilaria</taxon>
        <taxon>Gracilaria tenuistipitata</taxon>
    </lineage>
</organism>
<name>RK18_GRATL</name>
<dbReference type="EMBL" id="AY673996">
    <property type="protein sequence ID" value="AAT79667.1"/>
    <property type="molecule type" value="Genomic_DNA"/>
</dbReference>
<dbReference type="RefSeq" id="YP_063592.1">
    <property type="nucleotide sequence ID" value="NC_006137.1"/>
</dbReference>
<dbReference type="SMR" id="Q6B8W8"/>
<dbReference type="GeneID" id="2943962"/>
<dbReference type="GO" id="GO:0009507">
    <property type="term" value="C:chloroplast"/>
    <property type="evidence" value="ECO:0007669"/>
    <property type="project" value="UniProtKB-SubCell"/>
</dbReference>
<dbReference type="GO" id="GO:0022625">
    <property type="term" value="C:cytosolic large ribosomal subunit"/>
    <property type="evidence" value="ECO:0007669"/>
    <property type="project" value="TreeGrafter"/>
</dbReference>
<dbReference type="GO" id="GO:0008097">
    <property type="term" value="F:5S rRNA binding"/>
    <property type="evidence" value="ECO:0007669"/>
    <property type="project" value="TreeGrafter"/>
</dbReference>
<dbReference type="GO" id="GO:0003735">
    <property type="term" value="F:structural constituent of ribosome"/>
    <property type="evidence" value="ECO:0007669"/>
    <property type="project" value="InterPro"/>
</dbReference>
<dbReference type="GO" id="GO:0006412">
    <property type="term" value="P:translation"/>
    <property type="evidence" value="ECO:0007669"/>
    <property type="project" value="UniProtKB-UniRule"/>
</dbReference>
<dbReference type="CDD" id="cd00432">
    <property type="entry name" value="Ribosomal_L18_L5e"/>
    <property type="match status" value="1"/>
</dbReference>
<dbReference type="FunFam" id="3.30.420.100:FF:000001">
    <property type="entry name" value="50S ribosomal protein L18"/>
    <property type="match status" value="1"/>
</dbReference>
<dbReference type="Gene3D" id="3.30.420.100">
    <property type="match status" value="1"/>
</dbReference>
<dbReference type="HAMAP" id="MF_01337_B">
    <property type="entry name" value="Ribosomal_uL18_B"/>
    <property type="match status" value="1"/>
</dbReference>
<dbReference type="InterPro" id="IPR004389">
    <property type="entry name" value="Ribosomal_uL18_bac-type"/>
</dbReference>
<dbReference type="InterPro" id="IPR005484">
    <property type="entry name" value="Ribosomal_uL18_bac/euk"/>
</dbReference>
<dbReference type="NCBIfam" id="TIGR00060">
    <property type="entry name" value="L18_bact"/>
    <property type="match status" value="1"/>
</dbReference>
<dbReference type="PANTHER" id="PTHR12899">
    <property type="entry name" value="39S RIBOSOMAL PROTEIN L18, MITOCHONDRIAL"/>
    <property type="match status" value="1"/>
</dbReference>
<dbReference type="PANTHER" id="PTHR12899:SF3">
    <property type="entry name" value="LARGE RIBOSOMAL SUBUNIT PROTEIN UL18M"/>
    <property type="match status" value="1"/>
</dbReference>
<dbReference type="Pfam" id="PF00861">
    <property type="entry name" value="Ribosomal_L18p"/>
    <property type="match status" value="1"/>
</dbReference>
<dbReference type="SUPFAM" id="SSF53137">
    <property type="entry name" value="Translational machinery components"/>
    <property type="match status" value="1"/>
</dbReference>
<geneLocation type="chloroplast"/>
<keyword id="KW-0150">Chloroplast</keyword>
<keyword id="KW-0934">Plastid</keyword>
<keyword id="KW-0687">Ribonucleoprotein</keyword>
<keyword id="KW-0689">Ribosomal protein</keyword>
<keyword id="KW-0694">RNA-binding</keyword>
<keyword id="KW-0699">rRNA-binding</keyword>
<accession>Q6B8W8</accession>
<proteinExistence type="inferred from homology"/>
<gene>
    <name type="primary">rpl18</name>
    <name type="ordered locus">Grc000086</name>
</gene>